<organism>
    <name type="scientific">Trypanosoma brucei brucei (strain 927/4 GUTat10.1)</name>
    <dbReference type="NCBI Taxonomy" id="185431"/>
    <lineage>
        <taxon>Eukaryota</taxon>
        <taxon>Discoba</taxon>
        <taxon>Euglenozoa</taxon>
        <taxon>Kinetoplastea</taxon>
        <taxon>Metakinetoplastina</taxon>
        <taxon>Trypanosomatida</taxon>
        <taxon>Trypanosomatidae</taxon>
        <taxon>Trypanosoma</taxon>
    </lineage>
</organism>
<name>VTC1_TRYB2</name>
<accession>Q57UM0</accession>
<accession>D6XIS1</accession>
<keyword id="KW-0472">Membrane</keyword>
<keyword id="KW-1185">Reference proteome</keyword>
<keyword id="KW-0812">Transmembrane</keyword>
<keyword id="KW-1133">Transmembrane helix</keyword>
<feature type="chain" id="PRO_0000457145" description="Vacuolar transporter chaperone complex subunit 1">
    <location>
        <begin position="1"/>
        <end position="180"/>
    </location>
</feature>
<feature type="topological domain" description="Cytoplasmic" evidence="1">
    <location>
        <begin position="1"/>
        <end position="70"/>
    </location>
</feature>
<feature type="transmembrane region" description="Helical" evidence="2">
    <location>
        <begin position="71"/>
        <end position="91"/>
    </location>
</feature>
<feature type="topological domain" description="Vacuolar" evidence="1">
    <location>
        <begin position="92"/>
        <end position="100"/>
    </location>
</feature>
<feature type="transmembrane region" description="Helical" evidence="2">
    <location>
        <begin position="101"/>
        <end position="121"/>
    </location>
</feature>
<feature type="topological domain" description="Cytoplasmic" evidence="1">
    <location>
        <begin position="122"/>
        <end position="140"/>
    </location>
</feature>
<feature type="transmembrane region" description="Helical" evidence="2">
    <location>
        <begin position="141"/>
        <end position="161"/>
    </location>
</feature>
<feature type="topological domain" description="Vacuolar" evidence="1">
    <location>
        <begin position="162"/>
        <end position="180"/>
    </location>
</feature>
<proteinExistence type="inferred from homology"/>
<comment type="function">
    <text evidence="1">Accessory subunit of the vacuolar transporter chaperone (VTC) complex. The VTC complex acts as a vacuolar polyphosphate polymerase that catalyzes the synthesis of inorganic polyphosphate (polyP) via transfer of phosphate from ATP to a growing polyP chain, releasing ADP. VTC exposes its catalytic domain vtc4 to the cytosol, where the growing polyP chain winds through a tunnel-shaped pocket, integrating cytoplasmic polymer synthesis with polyP membrane translocation. The VTC complex carries 9 vacuolar transmembrane domains, which are likely to constitute the translocation channel into the organelle lumen. PolyP synthesis is tightly coupled to its transport into the vacuole lumen, in order to avoid otherwise toxic intermediates in the cytosol, and it depends on the proton gradient across the membrane, formed by V-ATPase. VTC1 contributes only 3 transmembrane domains to the complex. The VTC complex also plays a role in vacuolar membrane fusion.</text>
</comment>
<comment type="subunit">
    <text evidence="1">The VTC core complex is an integral membrane heterooligomer composed of at least the catalytic subunit vtc4 and the accessory subunits vtc1 and vtc2. vtc1 is a small membrane protein without hydrophilic domain. Vtc2 and vtc4 are related and have 2 hydrophilic domains that face the cytosol, an N-terminal SPX domain and the central core domain. The central core in vtc4 is the catalytic domain.</text>
</comment>
<comment type="subcellular location">
    <subcellularLocation>
        <location evidence="3">Acidocalcisome membrane</location>
        <topology evidence="2">Multi-pass membrane protein</topology>
    </subcellularLocation>
</comment>
<comment type="disruption phenotype">
    <text evidence="3">Causes an abnormal morphology of acidocalcisomes, a significant decrease in the amount of polyP and a deficient response to hyposmotic stress.</text>
</comment>
<comment type="similarity">
    <text evidence="4">Belongs to the VTC1 family.</text>
</comment>
<dbReference type="EMBL" id="AC159450">
    <property type="protein sequence ID" value="AAX70699.1"/>
    <property type="molecule type" value="Genomic_DNA"/>
</dbReference>
<dbReference type="EMBL" id="CP000070">
    <property type="protein sequence ID" value="AAZ12454.1"/>
    <property type="molecule type" value="Genomic_DNA"/>
</dbReference>
<dbReference type="RefSeq" id="XP_846013.1">
    <property type="nucleotide sequence ID" value="XM_840920.1"/>
</dbReference>
<dbReference type="SMR" id="Q57UM0"/>
<dbReference type="FunCoup" id="Q57UM0">
    <property type="interactions" value="14"/>
</dbReference>
<dbReference type="STRING" id="185431.Q57UM0"/>
<dbReference type="SwissPalm" id="Q57UM0"/>
<dbReference type="PaxDb" id="5691-AAZ12454"/>
<dbReference type="GeneID" id="3658604"/>
<dbReference type="KEGG" id="tbr:Tb927.7.3900"/>
<dbReference type="VEuPathDB" id="TriTrypDB:Tb927.7.3900"/>
<dbReference type="eggNOG" id="KOG4580">
    <property type="taxonomic scope" value="Eukaryota"/>
</dbReference>
<dbReference type="InParanoid" id="Q57UM0"/>
<dbReference type="OMA" id="TRGPTML"/>
<dbReference type="OrthoDB" id="2243669at2759"/>
<dbReference type="Proteomes" id="UP000008524">
    <property type="component" value="Chromosome 7"/>
</dbReference>
<dbReference type="GO" id="GO:0020022">
    <property type="term" value="C:acidocalcisome"/>
    <property type="evidence" value="ECO:0000314"/>
    <property type="project" value="GeneDB"/>
</dbReference>
<dbReference type="GO" id="GO:0033102">
    <property type="term" value="C:acidocalcisome membrane"/>
    <property type="evidence" value="ECO:0007669"/>
    <property type="project" value="UniProtKB-SubCell"/>
</dbReference>
<dbReference type="GO" id="GO:0010608">
    <property type="term" value="P:post-transcriptional regulation of gene expression"/>
    <property type="evidence" value="ECO:0000314"/>
    <property type="project" value="GeneDB"/>
</dbReference>
<dbReference type="InterPro" id="IPR003807">
    <property type="entry name" value="DUF202"/>
</dbReference>
<dbReference type="InterPro" id="IPR051572">
    <property type="entry name" value="VTC_Complex_Subunit"/>
</dbReference>
<dbReference type="PANTHER" id="PTHR46140">
    <property type="entry name" value="VACUOLAR TRANSPORTER CHAPERONE 1-RELATED"/>
    <property type="match status" value="1"/>
</dbReference>
<dbReference type="PANTHER" id="PTHR46140:SF1">
    <property type="entry name" value="VACUOLAR TRANSPORTER CHAPERONE COMPLEX SUBUNIT 4-RELATED"/>
    <property type="match status" value="1"/>
</dbReference>
<dbReference type="Pfam" id="PF02656">
    <property type="entry name" value="DUF202"/>
    <property type="match status" value="1"/>
</dbReference>
<reference key="1">
    <citation type="journal article" date="2005" name="Science">
        <title>Comparative genomics of trypanosomatid parasitic protozoa.</title>
        <authorList>
            <person name="El-Sayed N.M."/>
            <person name="Myler P.J."/>
            <person name="Blandin G."/>
            <person name="Berriman M."/>
            <person name="Crabtree J."/>
            <person name="Aggarwal G."/>
            <person name="Caler E."/>
            <person name="Renauld H."/>
            <person name="Worthey E.A."/>
            <person name="Hertz-Fowler C."/>
            <person name="Ghedin E."/>
            <person name="Peacock C."/>
            <person name="Bartholomeu D.C."/>
            <person name="Haas B.J."/>
            <person name="Tran A.N."/>
            <person name="Wortman J.R."/>
            <person name="Alsmark U.C."/>
            <person name="Angiuoli S."/>
            <person name="Anupama A."/>
            <person name="Badger J."/>
            <person name="Bringaud F."/>
            <person name="Cadag E."/>
            <person name="Carlton J.M."/>
            <person name="Cerqueira G.C."/>
            <person name="Creasy T."/>
            <person name="Delcher A.L."/>
            <person name="Djikeng A."/>
            <person name="Embley T.M."/>
            <person name="Hauser C."/>
            <person name="Ivens A.C."/>
            <person name="Kummerfeld S.K."/>
            <person name="Pereira-Leal J.B."/>
            <person name="Nilsson D."/>
            <person name="Peterson J."/>
            <person name="Salzberg S.L."/>
            <person name="Shallom J."/>
            <person name="Silva J.C."/>
            <person name="Sundaram J."/>
            <person name="Westenberger S."/>
            <person name="White O."/>
            <person name="Melville S.E."/>
            <person name="Donelson J.E."/>
            <person name="Andersson B."/>
            <person name="Stuart K.D."/>
            <person name="Hall N."/>
        </authorList>
    </citation>
    <scope>NUCLEOTIDE SEQUENCE [LARGE SCALE GENOMIC DNA]</scope>
    <source>
        <strain>927/4 GUTat10.1</strain>
    </source>
</reference>
<reference key="2">
    <citation type="journal article" date="2005" name="Science">
        <title>The genome of the African trypanosome Trypanosoma brucei.</title>
        <authorList>
            <person name="Berriman M."/>
            <person name="Ghedin E."/>
            <person name="Hertz-Fowler C."/>
            <person name="Blandin G."/>
            <person name="Renauld H."/>
            <person name="Bartholomeu D.C."/>
            <person name="Lennard N.J."/>
            <person name="Caler E."/>
            <person name="Hamlin N.E."/>
            <person name="Haas B."/>
            <person name="Bohme U."/>
            <person name="Hannick L."/>
            <person name="Aslett M.A."/>
            <person name="Shallom J."/>
            <person name="Marcello L."/>
            <person name="Hou L."/>
            <person name="Wickstead B."/>
            <person name="Alsmark U.C.M."/>
            <person name="Arrowsmith C."/>
            <person name="Atkin R.J."/>
            <person name="Barron A.J."/>
            <person name="Bringaud F."/>
            <person name="Brooks K."/>
            <person name="Carrington M."/>
            <person name="Cherevach I."/>
            <person name="Chillingworth T.J."/>
            <person name="Churcher C."/>
            <person name="Clark L.N."/>
            <person name="Corton C.H."/>
            <person name="Cronin A."/>
            <person name="Davies R.M."/>
            <person name="Doggett J."/>
            <person name="Djikeng A."/>
            <person name="Feldblyum T."/>
            <person name="Field M.C."/>
            <person name="Fraser A."/>
            <person name="Goodhead I."/>
            <person name="Hance Z."/>
            <person name="Harper D."/>
            <person name="Harris B.R."/>
            <person name="Hauser H."/>
            <person name="Hostetler J."/>
            <person name="Ivens A."/>
            <person name="Jagels K."/>
            <person name="Johnson D."/>
            <person name="Johnson J."/>
            <person name="Jones K."/>
            <person name="Kerhornou A.X."/>
            <person name="Koo H."/>
            <person name="Larke N."/>
            <person name="Landfear S."/>
            <person name="Larkin C."/>
            <person name="Leech V."/>
            <person name="Line A."/>
            <person name="Lord A."/>
            <person name="Macleod A."/>
            <person name="Mooney P.J."/>
            <person name="Moule S."/>
            <person name="Martin D.M."/>
            <person name="Morgan G.W."/>
            <person name="Mungall K."/>
            <person name="Norbertczak H."/>
            <person name="Ormond D."/>
            <person name="Pai G."/>
            <person name="Peacock C.S."/>
            <person name="Peterson J."/>
            <person name="Quail M.A."/>
            <person name="Rabbinowitsch E."/>
            <person name="Rajandream M.A."/>
            <person name="Reitter C."/>
            <person name="Salzberg S.L."/>
            <person name="Sanders M."/>
            <person name="Schobel S."/>
            <person name="Sharp S."/>
            <person name="Simmonds M."/>
            <person name="Simpson A.J."/>
            <person name="Tallon L."/>
            <person name="Turner C.M."/>
            <person name="Tait A."/>
            <person name="Tivey A.R."/>
            <person name="Van Aken S."/>
            <person name="Walker D."/>
            <person name="Wanless D."/>
            <person name="Wang S."/>
            <person name="White B."/>
            <person name="White O."/>
            <person name="Whitehead S."/>
            <person name="Woodward J."/>
            <person name="Wortman J."/>
            <person name="Adams M.D."/>
            <person name="Embley T.M."/>
            <person name="Gull K."/>
            <person name="Ullu E."/>
            <person name="Barry J.D."/>
            <person name="Fairlamb A.H."/>
            <person name="Opperdoes F."/>
            <person name="Barrell B.G."/>
            <person name="Donelson J.E."/>
            <person name="Hall N."/>
            <person name="Fraser C.M."/>
            <person name="Melville S.E."/>
            <person name="El-Sayed N.M.A."/>
        </authorList>
    </citation>
    <scope>NUCLEOTIDE SEQUENCE [LARGE SCALE GENOMIC DNA]</scope>
    <source>
        <strain>927/4 GUTat10.1</strain>
    </source>
</reference>
<reference key="3">
    <citation type="journal article" date="2007" name="Biochem. J.">
        <title>Ablation of a small transmembrane protein of Trypanosoma brucei (TbVTC1) involved in the synthesis of polyphosphate alters acidocalcisome biogenesis and function, and leads to a cytokinesis defect.</title>
        <authorList>
            <person name="Fang J."/>
            <person name="Rohloff P."/>
            <person name="Miranda K."/>
            <person name="Docampo R."/>
        </authorList>
    </citation>
    <scope>SUBCELLULAR LOCATION</scope>
    <scope>DISRUPTION PHENOTYPE</scope>
</reference>
<gene>
    <name type="primary">VTC1</name>
    <name type="ORF">Tb927.7.3900</name>
</gene>
<sequence length="180" mass="19768">MASVIEKGLASICCVTTSSKPWAEGEADGDVKYEDLRGPGGRNTSGSVSDKRICVPQKIDPKTFFANERTFLKWMSISVMIGMMSLTLLNFGDTSSNASELAGLVLLPVSILFMIHSLFVFKDRANKIYMREPMRYDDTKGPTILVLVLGVSLGIAAIFSVQKQYYRTASSSFNDGPRFS</sequence>
<evidence type="ECO:0000250" key="1">
    <source>
        <dbReference type="UniProtKB" id="P40046"/>
    </source>
</evidence>
<evidence type="ECO:0000255" key="2"/>
<evidence type="ECO:0000269" key="3">
    <source>
    </source>
</evidence>
<evidence type="ECO:0000305" key="4"/>
<protein>
    <recommendedName>
        <fullName>Vacuolar transporter chaperone complex subunit 1</fullName>
    </recommendedName>
    <alternativeName>
        <fullName>SPX-dependent polyphosphate polymerase VTC subunit 1</fullName>
    </alternativeName>
    <alternativeName>
        <fullName>Vacuolar membrane polyphosphate polymerase accessory subunit 1</fullName>
        <shortName>PolyP polymerase</shortName>
    </alternativeName>
</protein>